<dbReference type="EC" id="7.1.1.-" evidence="1"/>
<dbReference type="EMBL" id="AJ400848">
    <property type="protein sequence ID" value="CAB88788.1"/>
    <property type="molecule type" value="Genomic_DNA"/>
</dbReference>
<dbReference type="RefSeq" id="NP_054992.1">
    <property type="nucleotide sequence ID" value="NC_002202.1"/>
</dbReference>
<dbReference type="PDB" id="9GRX">
    <property type="method" value="EM"/>
    <property type="resolution" value="3.19 A"/>
    <property type="chains" value="I=4-166"/>
</dbReference>
<dbReference type="PDBsum" id="9GRX"/>
<dbReference type="EMDB" id="EMD-51527"/>
<dbReference type="SMR" id="Q9M3I7"/>
<dbReference type="FunCoup" id="Q9M3I7">
    <property type="interactions" value="56"/>
</dbReference>
<dbReference type="STRING" id="3562.Q9M3I7"/>
<dbReference type="GeneID" id="2715594"/>
<dbReference type="KEGG" id="soe:2715594"/>
<dbReference type="InParanoid" id="Q9M3I7"/>
<dbReference type="OrthoDB" id="24758at2759"/>
<dbReference type="Proteomes" id="UP001155700">
    <property type="component" value="Chloroplast Pltd"/>
</dbReference>
<dbReference type="GO" id="GO:0009535">
    <property type="term" value="C:chloroplast thylakoid membrane"/>
    <property type="evidence" value="ECO:0007669"/>
    <property type="project" value="UniProtKB-SubCell"/>
</dbReference>
<dbReference type="GO" id="GO:0051539">
    <property type="term" value="F:4 iron, 4 sulfur cluster binding"/>
    <property type="evidence" value="ECO:0007669"/>
    <property type="project" value="UniProtKB-KW"/>
</dbReference>
<dbReference type="GO" id="GO:0005506">
    <property type="term" value="F:iron ion binding"/>
    <property type="evidence" value="ECO:0007669"/>
    <property type="project" value="UniProtKB-UniRule"/>
</dbReference>
<dbReference type="GO" id="GO:0008137">
    <property type="term" value="F:NADH dehydrogenase (ubiquinone) activity"/>
    <property type="evidence" value="ECO:0007669"/>
    <property type="project" value="InterPro"/>
</dbReference>
<dbReference type="GO" id="GO:0048038">
    <property type="term" value="F:quinone binding"/>
    <property type="evidence" value="ECO:0007669"/>
    <property type="project" value="UniProtKB-KW"/>
</dbReference>
<dbReference type="GO" id="GO:0019684">
    <property type="term" value="P:photosynthesis, light reaction"/>
    <property type="evidence" value="ECO:0007669"/>
    <property type="project" value="UniProtKB-UniRule"/>
</dbReference>
<dbReference type="FunFam" id="3.30.70.3270:FF:000006">
    <property type="entry name" value="NAD(P)H-quinone oxidoreductase subunit I, chloroplastic"/>
    <property type="match status" value="1"/>
</dbReference>
<dbReference type="Gene3D" id="3.30.70.3270">
    <property type="match status" value="1"/>
</dbReference>
<dbReference type="HAMAP" id="MF_01351">
    <property type="entry name" value="NDH1_NuoI"/>
    <property type="match status" value="1"/>
</dbReference>
<dbReference type="InterPro" id="IPR017896">
    <property type="entry name" value="4Fe4S_Fe-S-bd"/>
</dbReference>
<dbReference type="InterPro" id="IPR017900">
    <property type="entry name" value="4Fe4S_Fe_S_CS"/>
</dbReference>
<dbReference type="InterPro" id="IPR010226">
    <property type="entry name" value="NADH_quinone_OxRdtase_chainI"/>
</dbReference>
<dbReference type="InterPro" id="IPR004497">
    <property type="entry name" value="NDHI"/>
</dbReference>
<dbReference type="NCBIfam" id="TIGR00403">
    <property type="entry name" value="ndhI"/>
    <property type="match status" value="1"/>
</dbReference>
<dbReference type="NCBIfam" id="TIGR01971">
    <property type="entry name" value="NuoI"/>
    <property type="match status" value="1"/>
</dbReference>
<dbReference type="NCBIfam" id="NF004537">
    <property type="entry name" value="PRK05888.1-3"/>
    <property type="match status" value="1"/>
</dbReference>
<dbReference type="PANTHER" id="PTHR47275">
    <property type="entry name" value="NAD(P)H-QUINONE OXIDOREDUCTASE SUBUNIT I, CHLOROPLASTIC"/>
    <property type="match status" value="1"/>
</dbReference>
<dbReference type="PANTHER" id="PTHR47275:SF1">
    <property type="entry name" value="NAD(P)H-QUINONE OXIDOREDUCTASE SUBUNIT I, CHLOROPLASTIC"/>
    <property type="match status" value="1"/>
</dbReference>
<dbReference type="Pfam" id="PF12838">
    <property type="entry name" value="Fer4_7"/>
    <property type="match status" value="1"/>
</dbReference>
<dbReference type="SUPFAM" id="SSF54862">
    <property type="entry name" value="4Fe-4S ferredoxins"/>
    <property type="match status" value="1"/>
</dbReference>
<dbReference type="PROSITE" id="PS00198">
    <property type="entry name" value="4FE4S_FER_1"/>
    <property type="match status" value="2"/>
</dbReference>
<dbReference type="PROSITE" id="PS51379">
    <property type="entry name" value="4FE4S_FER_2"/>
    <property type="match status" value="2"/>
</dbReference>
<name>NDHI_SPIOL</name>
<feature type="chain" id="PRO_0000118712" description="NAD(P)H-quinone oxidoreductase subunit I, chloroplastic">
    <location>
        <begin position="1"/>
        <end position="170"/>
    </location>
</feature>
<feature type="domain" description="4Fe-4S ferredoxin-type 1" evidence="1">
    <location>
        <begin position="55"/>
        <end position="84"/>
    </location>
</feature>
<feature type="domain" description="4Fe-4S ferredoxin-type 2" evidence="1">
    <location>
        <begin position="95"/>
        <end position="124"/>
    </location>
</feature>
<feature type="binding site" evidence="1">
    <location>
        <position position="64"/>
    </location>
    <ligand>
        <name>[4Fe-4S] cluster</name>
        <dbReference type="ChEBI" id="CHEBI:49883"/>
        <label>1</label>
    </ligand>
</feature>
<feature type="binding site" evidence="1">
    <location>
        <position position="67"/>
    </location>
    <ligand>
        <name>[4Fe-4S] cluster</name>
        <dbReference type="ChEBI" id="CHEBI:49883"/>
        <label>1</label>
    </ligand>
</feature>
<feature type="binding site" evidence="1">
    <location>
        <position position="70"/>
    </location>
    <ligand>
        <name>[4Fe-4S] cluster</name>
        <dbReference type="ChEBI" id="CHEBI:49883"/>
        <label>1</label>
    </ligand>
</feature>
<feature type="binding site" evidence="1">
    <location>
        <position position="74"/>
    </location>
    <ligand>
        <name>[4Fe-4S] cluster</name>
        <dbReference type="ChEBI" id="CHEBI:49883"/>
        <label>2</label>
    </ligand>
</feature>
<feature type="binding site" evidence="1">
    <location>
        <position position="104"/>
    </location>
    <ligand>
        <name>[4Fe-4S] cluster</name>
        <dbReference type="ChEBI" id="CHEBI:49883"/>
        <label>2</label>
    </ligand>
</feature>
<feature type="binding site" evidence="1">
    <location>
        <position position="107"/>
    </location>
    <ligand>
        <name>[4Fe-4S] cluster</name>
        <dbReference type="ChEBI" id="CHEBI:49883"/>
        <label>2</label>
    </ligand>
</feature>
<feature type="binding site" evidence="1">
    <location>
        <position position="110"/>
    </location>
    <ligand>
        <name>[4Fe-4S] cluster</name>
        <dbReference type="ChEBI" id="CHEBI:49883"/>
        <label>2</label>
    </ligand>
</feature>
<feature type="binding site" evidence="1">
    <location>
        <position position="114"/>
    </location>
    <ligand>
        <name>[4Fe-4S] cluster</name>
        <dbReference type="ChEBI" id="CHEBI:49883"/>
        <label>1</label>
    </ligand>
</feature>
<protein>
    <recommendedName>
        <fullName evidence="1">NAD(P)H-quinone oxidoreductase subunit I, chloroplastic</fullName>
        <ecNumber evidence="1">7.1.1.-</ecNumber>
    </recommendedName>
    <alternativeName>
        <fullName evidence="1">NAD(P)H dehydrogenase subunit I</fullName>
        <shortName evidence="1">NDH subunit I</shortName>
    </alternativeName>
    <alternativeName>
        <fullName evidence="1">NADH-plastoquinone oxidoreductase subunit I</fullName>
    </alternativeName>
</protein>
<geneLocation type="chloroplast"/>
<comment type="function">
    <text evidence="1">NDH shuttles electrons from NAD(P)H:plastoquinone, via FMN and iron-sulfur (Fe-S) centers, to quinones in the photosynthetic chain and possibly in a chloroplast respiratory chain. The immediate electron acceptor for the enzyme in this species is believed to be plastoquinone. Couples the redox reaction to proton translocation, and thus conserves the redox energy in a proton gradient.</text>
</comment>
<comment type="catalytic activity">
    <reaction evidence="1">
        <text>a plastoquinone + NADH + (n+1) H(+)(in) = a plastoquinol + NAD(+) + n H(+)(out)</text>
        <dbReference type="Rhea" id="RHEA:42608"/>
        <dbReference type="Rhea" id="RHEA-COMP:9561"/>
        <dbReference type="Rhea" id="RHEA-COMP:9562"/>
        <dbReference type="ChEBI" id="CHEBI:15378"/>
        <dbReference type="ChEBI" id="CHEBI:17757"/>
        <dbReference type="ChEBI" id="CHEBI:57540"/>
        <dbReference type="ChEBI" id="CHEBI:57945"/>
        <dbReference type="ChEBI" id="CHEBI:62192"/>
    </reaction>
</comment>
<comment type="catalytic activity">
    <reaction evidence="1">
        <text>a plastoquinone + NADPH + (n+1) H(+)(in) = a plastoquinol + NADP(+) + n H(+)(out)</text>
        <dbReference type="Rhea" id="RHEA:42612"/>
        <dbReference type="Rhea" id="RHEA-COMP:9561"/>
        <dbReference type="Rhea" id="RHEA-COMP:9562"/>
        <dbReference type="ChEBI" id="CHEBI:15378"/>
        <dbReference type="ChEBI" id="CHEBI:17757"/>
        <dbReference type="ChEBI" id="CHEBI:57783"/>
        <dbReference type="ChEBI" id="CHEBI:58349"/>
        <dbReference type="ChEBI" id="CHEBI:62192"/>
    </reaction>
</comment>
<comment type="cofactor">
    <cofactor evidence="1">
        <name>[4Fe-4S] cluster</name>
        <dbReference type="ChEBI" id="CHEBI:49883"/>
    </cofactor>
    <text evidence="1">Binds 2 [4Fe-4S] clusters per subunit.</text>
</comment>
<comment type="subunit">
    <text evidence="1">NDH is composed of at least 16 different subunits, 5 of which are encoded in the nucleus.</text>
</comment>
<comment type="subcellular location">
    <subcellularLocation>
        <location evidence="1">Plastid</location>
        <location evidence="1">Chloroplast thylakoid membrane</location>
        <topology evidence="1">Peripheral membrane protein</topology>
    </subcellularLocation>
</comment>
<comment type="similarity">
    <text evidence="1">Belongs to the complex I 23 kDa subunit family.</text>
</comment>
<organism>
    <name type="scientific">Spinacia oleracea</name>
    <name type="common">Spinach</name>
    <dbReference type="NCBI Taxonomy" id="3562"/>
    <lineage>
        <taxon>Eukaryota</taxon>
        <taxon>Viridiplantae</taxon>
        <taxon>Streptophyta</taxon>
        <taxon>Embryophyta</taxon>
        <taxon>Tracheophyta</taxon>
        <taxon>Spermatophyta</taxon>
        <taxon>Magnoliopsida</taxon>
        <taxon>eudicotyledons</taxon>
        <taxon>Gunneridae</taxon>
        <taxon>Pentapetalae</taxon>
        <taxon>Caryophyllales</taxon>
        <taxon>Chenopodiaceae</taxon>
        <taxon>Chenopodioideae</taxon>
        <taxon>Anserineae</taxon>
        <taxon>Spinacia</taxon>
    </lineage>
</organism>
<gene>
    <name evidence="1" type="primary">ndhI</name>
</gene>
<evidence type="ECO:0000255" key="1">
    <source>
        <dbReference type="HAMAP-Rule" id="MF_01351"/>
    </source>
</evidence>
<proteinExistence type="evidence at protein level"/>
<keyword id="KW-0002">3D-structure</keyword>
<keyword id="KW-0004">4Fe-4S</keyword>
<keyword id="KW-0150">Chloroplast</keyword>
<keyword id="KW-0408">Iron</keyword>
<keyword id="KW-0411">Iron-sulfur</keyword>
<keyword id="KW-0472">Membrane</keyword>
<keyword id="KW-0479">Metal-binding</keyword>
<keyword id="KW-0520">NAD</keyword>
<keyword id="KW-0521">NADP</keyword>
<keyword id="KW-0934">Plastid</keyword>
<keyword id="KW-0618">Plastoquinone</keyword>
<keyword id="KW-0874">Quinone</keyword>
<keyword id="KW-1185">Reference proteome</keyword>
<keyword id="KW-0677">Repeat</keyword>
<keyword id="KW-0793">Thylakoid</keyword>
<keyword id="KW-1278">Translocase</keyword>
<reference key="1">
    <citation type="journal article" date="2001" name="Plant Mol. Biol.">
        <title>The plastid chromosome of spinach (Spinacia oleracea): complete nucleotide sequence and gene organization.</title>
        <authorList>
            <person name="Schmitz-Linneweber C."/>
            <person name="Maier R.M."/>
            <person name="Alcaraz J.-P."/>
            <person name="Cottet A."/>
            <person name="Herrmann R.G."/>
            <person name="Mache R."/>
        </authorList>
    </citation>
    <scope>NUCLEOTIDE SEQUENCE [LARGE SCALE GENOMIC DNA]</scope>
    <source>
        <strain>cv. Geant d'hiver</strain>
        <strain>cv. Monatol</strain>
    </source>
</reference>
<sequence>MFPMVTGFINYGQQTIRAARYIGQSFMITLSHANRLPVTIQYPYEKLITSERFRGRIHFEFDKCIACEVCVRACPIDLPVVDWKLETDIRKKRLLNYSIDFGICIFCGNCVEYCPTNCLSMTEEYELSTYDRHELNYNQIALGRLPISITDDYTIRTILNSPQTKEKACD</sequence>
<accession>Q9M3I7</accession>